<evidence type="ECO:0000255" key="1">
    <source>
        <dbReference type="HAMAP-Rule" id="MF_00373"/>
    </source>
</evidence>
<evidence type="ECO:0000305" key="2"/>
<reference key="1">
    <citation type="journal article" date="2009" name="PLoS Genet.">
        <title>Organised genome dynamics in the Escherichia coli species results in highly diverse adaptive paths.</title>
        <authorList>
            <person name="Touchon M."/>
            <person name="Hoede C."/>
            <person name="Tenaillon O."/>
            <person name="Barbe V."/>
            <person name="Baeriswyl S."/>
            <person name="Bidet P."/>
            <person name="Bingen E."/>
            <person name="Bonacorsi S."/>
            <person name="Bouchier C."/>
            <person name="Bouvet O."/>
            <person name="Calteau A."/>
            <person name="Chiapello H."/>
            <person name="Clermont O."/>
            <person name="Cruveiller S."/>
            <person name="Danchin A."/>
            <person name="Diard M."/>
            <person name="Dossat C."/>
            <person name="Karoui M.E."/>
            <person name="Frapy E."/>
            <person name="Garry L."/>
            <person name="Ghigo J.M."/>
            <person name="Gilles A.M."/>
            <person name="Johnson J."/>
            <person name="Le Bouguenec C."/>
            <person name="Lescat M."/>
            <person name="Mangenot S."/>
            <person name="Martinez-Jehanne V."/>
            <person name="Matic I."/>
            <person name="Nassif X."/>
            <person name="Oztas S."/>
            <person name="Petit M.A."/>
            <person name="Pichon C."/>
            <person name="Rouy Z."/>
            <person name="Ruf C.S."/>
            <person name="Schneider D."/>
            <person name="Tourret J."/>
            <person name="Vacherie B."/>
            <person name="Vallenet D."/>
            <person name="Medigue C."/>
            <person name="Rocha E.P.C."/>
            <person name="Denamur E."/>
        </authorList>
    </citation>
    <scope>NUCLEOTIDE SEQUENCE [LARGE SCALE GENOMIC DNA]</scope>
    <source>
        <strain>ED1a</strain>
    </source>
</reference>
<keyword id="KW-0687">Ribonucleoprotein</keyword>
<keyword id="KW-0689">Ribosomal protein</keyword>
<feature type="chain" id="PRO_1000195923" description="Large ribosomal subunit protein bL28">
    <location>
        <begin position="1"/>
        <end position="78"/>
    </location>
</feature>
<gene>
    <name evidence="1" type="primary">rpmB</name>
    <name type="ordered locus">ECED1_4320</name>
</gene>
<comment type="similarity">
    <text evidence="1">Belongs to the bacterial ribosomal protein bL28 family.</text>
</comment>
<dbReference type="EMBL" id="CU928162">
    <property type="protein sequence ID" value="CAR10448.2"/>
    <property type="molecule type" value="Genomic_DNA"/>
</dbReference>
<dbReference type="RefSeq" id="WP_000091955.1">
    <property type="nucleotide sequence ID" value="NC_011745.1"/>
</dbReference>
<dbReference type="SMR" id="B7N277"/>
<dbReference type="GeneID" id="93778350"/>
<dbReference type="KEGG" id="ecq:ECED1_4320"/>
<dbReference type="HOGENOM" id="CLU_064548_3_1_6"/>
<dbReference type="Proteomes" id="UP000000748">
    <property type="component" value="Chromosome"/>
</dbReference>
<dbReference type="GO" id="GO:0022625">
    <property type="term" value="C:cytosolic large ribosomal subunit"/>
    <property type="evidence" value="ECO:0007669"/>
    <property type="project" value="TreeGrafter"/>
</dbReference>
<dbReference type="GO" id="GO:0003735">
    <property type="term" value="F:structural constituent of ribosome"/>
    <property type="evidence" value="ECO:0007669"/>
    <property type="project" value="InterPro"/>
</dbReference>
<dbReference type="GO" id="GO:0006412">
    <property type="term" value="P:translation"/>
    <property type="evidence" value="ECO:0007669"/>
    <property type="project" value="UniProtKB-UniRule"/>
</dbReference>
<dbReference type="FunFam" id="2.30.170.40:FF:000001">
    <property type="entry name" value="50S ribosomal protein L28"/>
    <property type="match status" value="1"/>
</dbReference>
<dbReference type="Gene3D" id="2.30.170.40">
    <property type="entry name" value="Ribosomal protein L28/L24"/>
    <property type="match status" value="1"/>
</dbReference>
<dbReference type="HAMAP" id="MF_00373">
    <property type="entry name" value="Ribosomal_bL28"/>
    <property type="match status" value="1"/>
</dbReference>
<dbReference type="InterPro" id="IPR026569">
    <property type="entry name" value="Ribosomal_bL28"/>
</dbReference>
<dbReference type="InterPro" id="IPR034704">
    <property type="entry name" value="Ribosomal_bL28/bL31-like_sf"/>
</dbReference>
<dbReference type="InterPro" id="IPR001383">
    <property type="entry name" value="Ribosomal_bL28_bact-type"/>
</dbReference>
<dbReference type="InterPro" id="IPR037147">
    <property type="entry name" value="Ribosomal_bL28_sf"/>
</dbReference>
<dbReference type="NCBIfam" id="TIGR00009">
    <property type="entry name" value="L28"/>
    <property type="match status" value="1"/>
</dbReference>
<dbReference type="PANTHER" id="PTHR13528">
    <property type="entry name" value="39S RIBOSOMAL PROTEIN L28, MITOCHONDRIAL"/>
    <property type="match status" value="1"/>
</dbReference>
<dbReference type="PANTHER" id="PTHR13528:SF2">
    <property type="entry name" value="LARGE RIBOSOMAL SUBUNIT PROTEIN BL28M"/>
    <property type="match status" value="1"/>
</dbReference>
<dbReference type="Pfam" id="PF00830">
    <property type="entry name" value="Ribosomal_L28"/>
    <property type="match status" value="1"/>
</dbReference>
<dbReference type="SUPFAM" id="SSF143800">
    <property type="entry name" value="L28p-like"/>
    <property type="match status" value="1"/>
</dbReference>
<protein>
    <recommendedName>
        <fullName evidence="1">Large ribosomal subunit protein bL28</fullName>
    </recommendedName>
    <alternativeName>
        <fullName evidence="2">50S ribosomal protein L28</fullName>
    </alternativeName>
</protein>
<name>RL28_ECO81</name>
<accession>B7N277</accession>
<sequence>MSRVCQVTGKRPVTGNNRSHALNATKRRFLPNLHSHRFWVESEKRFVTLRVSAKGMRVIDKKGIDTVLAELRARGEKY</sequence>
<proteinExistence type="inferred from homology"/>
<organism>
    <name type="scientific">Escherichia coli O81 (strain ED1a)</name>
    <dbReference type="NCBI Taxonomy" id="585397"/>
    <lineage>
        <taxon>Bacteria</taxon>
        <taxon>Pseudomonadati</taxon>
        <taxon>Pseudomonadota</taxon>
        <taxon>Gammaproteobacteria</taxon>
        <taxon>Enterobacterales</taxon>
        <taxon>Enterobacteriaceae</taxon>
        <taxon>Escherichia</taxon>
    </lineage>
</organism>